<name>PSBB_NEPOL</name>
<organism>
    <name type="scientific">Nephroselmis olivacea</name>
    <name type="common">Green alga</name>
    <dbReference type="NCBI Taxonomy" id="31312"/>
    <lineage>
        <taxon>Eukaryota</taxon>
        <taxon>Viridiplantae</taxon>
        <taxon>Chlorophyta</taxon>
        <taxon>Nephroselmidophyceae</taxon>
        <taxon>Nephroselmidales</taxon>
        <taxon>Nephroselmidaceae</taxon>
        <taxon>Nephroselmis</taxon>
    </lineage>
</organism>
<dbReference type="EMBL" id="AF137379">
    <property type="protein sequence ID" value="AAD54852.1"/>
    <property type="molecule type" value="Genomic_DNA"/>
</dbReference>
<dbReference type="RefSeq" id="NP_050881.1">
    <property type="nucleotide sequence ID" value="NC_000927.1"/>
</dbReference>
<dbReference type="SMR" id="Q9TKW4"/>
<dbReference type="GeneID" id="801962"/>
<dbReference type="GO" id="GO:0009535">
    <property type="term" value="C:chloroplast thylakoid membrane"/>
    <property type="evidence" value="ECO:0007669"/>
    <property type="project" value="UniProtKB-SubCell"/>
</dbReference>
<dbReference type="GO" id="GO:0009523">
    <property type="term" value="C:photosystem II"/>
    <property type="evidence" value="ECO:0007669"/>
    <property type="project" value="UniProtKB-KW"/>
</dbReference>
<dbReference type="GO" id="GO:0016168">
    <property type="term" value="F:chlorophyll binding"/>
    <property type="evidence" value="ECO:0007669"/>
    <property type="project" value="UniProtKB-UniRule"/>
</dbReference>
<dbReference type="GO" id="GO:0045156">
    <property type="term" value="F:electron transporter, transferring electrons within the cyclic electron transport pathway of photosynthesis activity"/>
    <property type="evidence" value="ECO:0007669"/>
    <property type="project" value="InterPro"/>
</dbReference>
<dbReference type="GO" id="GO:0009772">
    <property type="term" value="P:photosynthetic electron transport in photosystem II"/>
    <property type="evidence" value="ECO:0007669"/>
    <property type="project" value="InterPro"/>
</dbReference>
<dbReference type="FunFam" id="3.10.680.10:FF:000001">
    <property type="entry name" value="Photosystem II CP47 reaction center protein"/>
    <property type="match status" value="1"/>
</dbReference>
<dbReference type="Gene3D" id="3.10.680.10">
    <property type="entry name" value="Photosystem II CP47 reaction center protein"/>
    <property type="match status" value="1"/>
</dbReference>
<dbReference type="HAMAP" id="MF_01495">
    <property type="entry name" value="PSII_PsbB_CP47"/>
    <property type="match status" value="1"/>
</dbReference>
<dbReference type="InterPro" id="IPR000932">
    <property type="entry name" value="PS_antenna-like"/>
</dbReference>
<dbReference type="InterPro" id="IPR036001">
    <property type="entry name" value="PS_II_antenna-like_sf"/>
</dbReference>
<dbReference type="InterPro" id="IPR017486">
    <property type="entry name" value="PSII_PsbB"/>
</dbReference>
<dbReference type="NCBIfam" id="TIGR03039">
    <property type="entry name" value="PS_II_CP47"/>
    <property type="match status" value="1"/>
</dbReference>
<dbReference type="Pfam" id="PF00421">
    <property type="entry name" value="PSII"/>
    <property type="match status" value="1"/>
</dbReference>
<dbReference type="SUPFAM" id="SSF161077">
    <property type="entry name" value="Photosystem II antenna protein-like"/>
    <property type="match status" value="1"/>
</dbReference>
<feature type="chain" id="PRO_0000077488" description="Photosystem II CP47 reaction center protein">
    <location>
        <begin position="1"/>
        <end position="508"/>
    </location>
</feature>
<feature type="transmembrane region" description="Helical" evidence="1">
    <location>
        <begin position="21"/>
        <end position="36"/>
    </location>
</feature>
<feature type="transmembrane region" description="Helical" evidence="1">
    <location>
        <begin position="101"/>
        <end position="115"/>
    </location>
</feature>
<feature type="transmembrane region" description="Helical" evidence="1">
    <location>
        <begin position="140"/>
        <end position="156"/>
    </location>
</feature>
<feature type="transmembrane region" description="Helical" evidence="1">
    <location>
        <begin position="203"/>
        <end position="218"/>
    </location>
</feature>
<feature type="transmembrane region" description="Helical" evidence="1">
    <location>
        <begin position="237"/>
        <end position="252"/>
    </location>
</feature>
<feature type="transmembrane region" description="Helical" evidence="1">
    <location>
        <begin position="457"/>
        <end position="472"/>
    </location>
</feature>
<evidence type="ECO:0000255" key="1">
    <source>
        <dbReference type="HAMAP-Rule" id="MF_01495"/>
    </source>
</evidence>
<keyword id="KW-0148">Chlorophyll</keyword>
<keyword id="KW-0150">Chloroplast</keyword>
<keyword id="KW-0157">Chromophore</keyword>
<keyword id="KW-0472">Membrane</keyword>
<keyword id="KW-0602">Photosynthesis</keyword>
<keyword id="KW-0604">Photosystem II</keyword>
<keyword id="KW-0934">Plastid</keyword>
<keyword id="KW-0793">Thylakoid</keyword>
<keyword id="KW-0812">Transmembrane</keyword>
<keyword id="KW-1133">Transmembrane helix</keyword>
<protein>
    <recommendedName>
        <fullName evidence="1">Photosystem II CP47 reaction center protein</fullName>
    </recommendedName>
    <alternativeName>
        <fullName evidence="1">PSII 47 kDa protein</fullName>
    </alternativeName>
    <alternativeName>
        <fullName evidence="1">Protein CP-47</fullName>
    </alternativeName>
</protein>
<gene>
    <name evidence="1" type="primary">psbB</name>
</gene>
<proteinExistence type="inferred from homology"/>
<accession>Q9TKW4</accession>
<comment type="function">
    <text evidence="1">One of the components of the core complex of photosystem II (PSII). It binds chlorophyll and helps catalyze the primary light-induced photochemical processes of PSII. PSII is a light-driven water:plastoquinone oxidoreductase, using light energy to abstract electrons from H(2)O, generating O(2) and a proton gradient subsequently used for ATP formation.</text>
</comment>
<comment type="cofactor">
    <text evidence="1">Binds multiple chlorophylls. PSII binds additional chlorophylls, carotenoids and specific lipids.</text>
</comment>
<comment type="subunit">
    <text evidence="1">PSII is composed of 1 copy each of membrane proteins PsbA, PsbB, PsbC, PsbD, PsbE, PsbF, PsbH, PsbI, PsbJ, PsbK, PsbL, PsbM, PsbT, PsbX, PsbY, PsbZ, Psb30/Ycf12, at least 3 peripheral proteins of the oxygen-evolving complex and a large number of cofactors. It forms dimeric complexes.</text>
</comment>
<comment type="subcellular location">
    <subcellularLocation>
        <location evidence="1">Plastid</location>
        <location evidence="1">Chloroplast thylakoid membrane</location>
        <topology evidence="1">Multi-pass membrane protein</topology>
    </subcellularLocation>
</comment>
<comment type="similarity">
    <text evidence="1">Belongs to the PsbB/PsbC family. PsbB subfamily.</text>
</comment>
<geneLocation type="chloroplast"/>
<reference key="1">
    <citation type="journal article" date="1999" name="Proc. Natl. Acad. Sci. U.S.A.">
        <title>The complete chloroplast DNA sequence of the green alga Nephroselmis olivacea: insights into the architecture of ancestral chloroplast genomes.</title>
        <authorList>
            <person name="Turmel M."/>
            <person name="Otis C."/>
            <person name="Lemieux C."/>
        </authorList>
    </citation>
    <scope>NUCLEOTIDE SEQUENCE [LARGE SCALE GENOMIC DNA]</scope>
    <source>
        <strain>NIES-484 / S-N-5-8</strain>
    </source>
</reference>
<sequence length="508" mass="56014">MGLPWYRVHTVVLNDPGRLIAVHLMHTALVSGWAGSMALYEISVFDPSDPVLNPMWRQGMFVIPFMTRLGVTKSWGGWSITGESVSNPGIWSYEGVATAHILLSGALFMAAIWHWVFWDLELFRDPRTGEPALDLPKIFGIHLFLSGLLCFGFGAFHVTGLYGPGIWVSDPYGITGSVQPVEPAWGPEGFDPFNPGGIASHHIAAGILGILAGLFHLSVRPPQRLYKALRMGNVETVLSSSIAAVFWAAFVVSGTMWYGSAATPIELFGPTRYQWDQGFFQQEIEKRVQGSLASGASLSDAWAKIPEKLSFYDYIGNNPAKGGLFRAGAMNSGDGIAAGWLGHPVFTDKAGNELFVRRMPTFFETFPVLLVDKDGVVRADVPFRRAESKYSIEQVGVSVTFYGGELDGVTFNDPSTVKKYARRAQLGSVFEFDRATLQSDGVFRSSPRGWFTFGHLWFALLFFFGHIWHGARTIFRDVFGGIDPDLDDQVEFGAFQKLGDVTTRRQAV</sequence>